<protein>
    <recommendedName>
        <fullName evidence="1">tRNA-specific 2-thiouridylase MnmA</fullName>
        <ecNumber evidence="1">2.8.1.13</ecNumber>
    </recommendedName>
</protein>
<gene>
    <name evidence="1" type="primary">mnmA</name>
    <name type="synonym">trmU</name>
    <name type="ordered locus">PM1336</name>
</gene>
<organism>
    <name type="scientific">Pasteurella multocida (strain Pm70)</name>
    <dbReference type="NCBI Taxonomy" id="272843"/>
    <lineage>
        <taxon>Bacteria</taxon>
        <taxon>Pseudomonadati</taxon>
        <taxon>Pseudomonadota</taxon>
        <taxon>Gammaproteobacteria</taxon>
        <taxon>Pasteurellales</taxon>
        <taxon>Pasteurellaceae</taxon>
        <taxon>Pasteurella</taxon>
    </lineage>
</organism>
<dbReference type="EC" id="2.8.1.13" evidence="1"/>
<dbReference type="EMBL" id="AE004439">
    <property type="protein sequence ID" value="AAK03420.1"/>
    <property type="molecule type" value="Genomic_DNA"/>
</dbReference>
<dbReference type="RefSeq" id="WP_010907131.1">
    <property type="nucleotide sequence ID" value="NC_002663.1"/>
</dbReference>
<dbReference type="SMR" id="Q9CLA3"/>
<dbReference type="STRING" id="272843.PM1336"/>
<dbReference type="EnsemblBacteria" id="AAK03420">
    <property type="protein sequence ID" value="AAK03420"/>
    <property type="gene ID" value="PM1336"/>
</dbReference>
<dbReference type="KEGG" id="pmu:PM1336"/>
<dbReference type="HOGENOM" id="CLU_035188_1_0_6"/>
<dbReference type="OrthoDB" id="9800696at2"/>
<dbReference type="Proteomes" id="UP000000809">
    <property type="component" value="Chromosome"/>
</dbReference>
<dbReference type="GO" id="GO:0005737">
    <property type="term" value="C:cytoplasm"/>
    <property type="evidence" value="ECO:0007669"/>
    <property type="project" value="UniProtKB-SubCell"/>
</dbReference>
<dbReference type="GO" id="GO:0005524">
    <property type="term" value="F:ATP binding"/>
    <property type="evidence" value="ECO:0007669"/>
    <property type="project" value="UniProtKB-KW"/>
</dbReference>
<dbReference type="GO" id="GO:0000049">
    <property type="term" value="F:tRNA binding"/>
    <property type="evidence" value="ECO:0007669"/>
    <property type="project" value="UniProtKB-KW"/>
</dbReference>
<dbReference type="GO" id="GO:0103016">
    <property type="term" value="F:tRNA-uridine 2-sulfurtransferase activity"/>
    <property type="evidence" value="ECO:0007669"/>
    <property type="project" value="UniProtKB-EC"/>
</dbReference>
<dbReference type="GO" id="GO:0002143">
    <property type="term" value="P:tRNA wobble position uridine thiolation"/>
    <property type="evidence" value="ECO:0007669"/>
    <property type="project" value="TreeGrafter"/>
</dbReference>
<dbReference type="CDD" id="cd01998">
    <property type="entry name" value="MnmA_TRMU-like"/>
    <property type="match status" value="1"/>
</dbReference>
<dbReference type="FunFam" id="2.30.30.280:FF:000001">
    <property type="entry name" value="tRNA-specific 2-thiouridylase MnmA"/>
    <property type="match status" value="1"/>
</dbReference>
<dbReference type="FunFam" id="2.40.30.10:FF:000023">
    <property type="entry name" value="tRNA-specific 2-thiouridylase MnmA"/>
    <property type="match status" value="1"/>
</dbReference>
<dbReference type="FunFam" id="3.40.50.620:FF:000004">
    <property type="entry name" value="tRNA-specific 2-thiouridylase MnmA"/>
    <property type="match status" value="1"/>
</dbReference>
<dbReference type="Gene3D" id="2.30.30.280">
    <property type="entry name" value="Adenine nucleotide alpha hydrolases-like domains"/>
    <property type="match status" value="1"/>
</dbReference>
<dbReference type="Gene3D" id="3.40.50.620">
    <property type="entry name" value="HUPs"/>
    <property type="match status" value="1"/>
</dbReference>
<dbReference type="Gene3D" id="2.40.30.10">
    <property type="entry name" value="Translation factors"/>
    <property type="match status" value="1"/>
</dbReference>
<dbReference type="HAMAP" id="MF_00144">
    <property type="entry name" value="tRNA_thiouridyl_MnmA"/>
    <property type="match status" value="1"/>
</dbReference>
<dbReference type="InterPro" id="IPR004506">
    <property type="entry name" value="MnmA-like"/>
</dbReference>
<dbReference type="InterPro" id="IPR046885">
    <property type="entry name" value="MnmA-like_C"/>
</dbReference>
<dbReference type="InterPro" id="IPR046884">
    <property type="entry name" value="MnmA-like_central"/>
</dbReference>
<dbReference type="InterPro" id="IPR023382">
    <property type="entry name" value="MnmA-like_central_sf"/>
</dbReference>
<dbReference type="InterPro" id="IPR014729">
    <property type="entry name" value="Rossmann-like_a/b/a_fold"/>
</dbReference>
<dbReference type="NCBIfam" id="NF001138">
    <property type="entry name" value="PRK00143.1"/>
    <property type="match status" value="1"/>
</dbReference>
<dbReference type="NCBIfam" id="TIGR00420">
    <property type="entry name" value="trmU"/>
    <property type="match status" value="1"/>
</dbReference>
<dbReference type="PANTHER" id="PTHR11933:SF5">
    <property type="entry name" value="MITOCHONDRIAL TRNA-SPECIFIC 2-THIOURIDYLASE 1"/>
    <property type="match status" value="1"/>
</dbReference>
<dbReference type="PANTHER" id="PTHR11933">
    <property type="entry name" value="TRNA 5-METHYLAMINOMETHYL-2-THIOURIDYLATE -METHYLTRANSFERASE"/>
    <property type="match status" value="1"/>
</dbReference>
<dbReference type="Pfam" id="PF03054">
    <property type="entry name" value="tRNA_Me_trans"/>
    <property type="match status" value="1"/>
</dbReference>
<dbReference type="Pfam" id="PF20258">
    <property type="entry name" value="tRNA_Me_trans_C"/>
    <property type="match status" value="1"/>
</dbReference>
<dbReference type="Pfam" id="PF20259">
    <property type="entry name" value="tRNA_Me_trans_M"/>
    <property type="match status" value="1"/>
</dbReference>
<dbReference type="SUPFAM" id="SSF52402">
    <property type="entry name" value="Adenine nucleotide alpha hydrolases-like"/>
    <property type="match status" value="1"/>
</dbReference>
<proteinExistence type="inferred from homology"/>
<comment type="function">
    <text evidence="1">Catalyzes the 2-thiolation of uridine at the wobble position (U34) of tRNA, leading to the formation of s(2)U34.</text>
</comment>
<comment type="catalytic activity">
    <reaction evidence="1">
        <text>S-sulfanyl-L-cysteinyl-[protein] + uridine(34) in tRNA + AH2 + ATP = 2-thiouridine(34) in tRNA + L-cysteinyl-[protein] + A + AMP + diphosphate + H(+)</text>
        <dbReference type="Rhea" id="RHEA:47032"/>
        <dbReference type="Rhea" id="RHEA-COMP:10131"/>
        <dbReference type="Rhea" id="RHEA-COMP:11726"/>
        <dbReference type="Rhea" id="RHEA-COMP:11727"/>
        <dbReference type="Rhea" id="RHEA-COMP:11728"/>
        <dbReference type="ChEBI" id="CHEBI:13193"/>
        <dbReference type="ChEBI" id="CHEBI:15378"/>
        <dbReference type="ChEBI" id="CHEBI:17499"/>
        <dbReference type="ChEBI" id="CHEBI:29950"/>
        <dbReference type="ChEBI" id="CHEBI:30616"/>
        <dbReference type="ChEBI" id="CHEBI:33019"/>
        <dbReference type="ChEBI" id="CHEBI:61963"/>
        <dbReference type="ChEBI" id="CHEBI:65315"/>
        <dbReference type="ChEBI" id="CHEBI:87170"/>
        <dbReference type="ChEBI" id="CHEBI:456215"/>
        <dbReference type="EC" id="2.8.1.13"/>
    </reaction>
</comment>
<comment type="subcellular location">
    <subcellularLocation>
        <location evidence="1">Cytoplasm</location>
    </subcellularLocation>
</comment>
<comment type="similarity">
    <text evidence="1">Belongs to the MnmA/TRMU family.</text>
</comment>
<name>MNMA_PASMU</name>
<keyword id="KW-0067">ATP-binding</keyword>
<keyword id="KW-0963">Cytoplasm</keyword>
<keyword id="KW-1015">Disulfide bond</keyword>
<keyword id="KW-0547">Nucleotide-binding</keyword>
<keyword id="KW-1185">Reference proteome</keyword>
<keyword id="KW-0694">RNA-binding</keyword>
<keyword id="KW-0808">Transferase</keyword>
<keyword id="KW-0819">tRNA processing</keyword>
<keyword id="KW-0820">tRNA-binding</keyword>
<feature type="chain" id="PRO_0000121661" description="tRNA-specific 2-thiouridylase MnmA">
    <location>
        <begin position="1"/>
        <end position="383"/>
    </location>
</feature>
<feature type="region of interest" description="Interaction with target base in tRNA" evidence="1">
    <location>
        <begin position="115"/>
        <end position="117"/>
    </location>
</feature>
<feature type="region of interest" description="Interaction with tRNA" evidence="1">
    <location>
        <begin position="167"/>
        <end position="169"/>
    </location>
</feature>
<feature type="region of interest" description="Interaction with tRNA" evidence="1">
    <location>
        <begin position="329"/>
        <end position="330"/>
    </location>
</feature>
<feature type="active site" description="Nucleophile" evidence="1">
    <location>
        <position position="120"/>
    </location>
</feature>
<feature type="active site" description="Cysteine persulfide intermediate" evidence="1">
    <location>
        <position position="217"/>
    </location>
</feature>
<feature type="binding site" evidence="1">
    <location>
        <begin position="29"/>
        <end position="36"/>
    </location>
    <ligand>
        <name>ATP</name>
        <dbReference type="ChEBI" id="CHEBI:30616"/>
    </ligand>
</feature>
<feature type="binding site" evidence="1">
    <location>
        <position position="55"/>
    </location>
    <ligand>
        <name>ATP</name>
        <dbReference type="ChEBI" id="CHEBI:30616"/>
    </ligand>
</feature>
<feature type="binding site" evidence="1">
    <location>
        <position position="145"/>
    </location>
    <ligand>
        <name>ATP</name>
        <dbReference type="ChEBI" id="CHEBI:30616"/>
    </ligand>
</feature>
<feature type="site" description="Interaction with tRNA" evidence="1">
    <location>
        <position position="146"/>
    </location>
</feature>
<feature type="site" description="Interaction with tRNA" evidence="1">
    <location>
        <position position="362"/>
    </location>
</feature>
<feature type="disulfide bond" description="Alternate" evidence="1">
    <location>
        <begin position="120"/>
        <end position="217"/>
    </location>
</feature>
<reference key="1">
    <citation type="journal article" date="2001" name="Proc. Natl. Acad. Sci. U.S.A.">
        <title>Complete genomic sequence of Pasteurella multocida Pm70.</title>
        <authorList>
            <person name="May B.J."/>
            <person name="Zhang Q."/>
            <person name="Li L.L."/>
            <person name="Paustian M.L."/>
            <person name="Whittam T.S."/>
            <person name="Kapur V."/>
        </authorList>
    </citation>
    <scope>NUCLEOTIDE SEQUENCE [LARGE SCALE GENOMIC DNA]</scope>
    <source>
        <strain>Pm70</strain>
    </source>
</reference>
<accession>Q9CLA3</accession>
<evidence type="ECO:0000255" key="1">
    <source>
        <dbReference type="HAMAP-Rule" id="MF_00144"/>
    </source>
</evidence>
<sequence>MKSKTYETHFPPLSAEQLAENRKKKVICGMSGGVDSSVSAFILQQQGYQVEGLFMKNWEEDDDTDYCTAAADLADAQAVCDKLGIKLHKINFAAEYWDNVFEHFLQEYKAGRTPNPDILCNKEIKFKAFLDYAAEDLGADYIATGHYVRRGEKDGQCQLLRGLDNNKDQSYFLYTLSKDQVAQSLFPVGEIEKPIVRAIAEDLGLATAKKKDSTGICFIGERKFKDFLARYLPAQPGEIRTVEGKVVGRHDGLMYHTLGQRKGLGIGGVKGMGEDPFYVVEKDLVNNVLVVAQGHDNSALLSSGLIASQLHWVDRQPIRQPVRCTVKTRYRQEDIPCEIQPINDETIRVVFDEPQIAVTPGQSAVFYQGEICLGGGVIETQIK</sequence>